<feature type="chain" id="PRO_0000386712" description="Ribosomal RNA small subunit methyltransferase H">
    <location>
        <begin position="1"/>
        <end position="307"/>
    </location>
</feature>
<feature type="region of interest" description="Disordered" evidence="2">
    <location>
        <begin position="287"/>
        <end position="307"/>
    </location>
</feature>
<feature type="binding site" evidence="1">
    <location>
        <begin position="32"/>
        <end position="34"/>
    </location>
    <ligand>
        <name>S-adenosyl-L-methionine</name>
        <dbReference type="ChEBI" id="CHEBI:59789"/>
    </ligand>
</feature>
<feature type="binding site" evidence="1">
    <location>
        <position position="52"/>
    </location>
    <ligand>
        <name>S-adenosyl-L-methionine</name>
        <dbReference type="ChEBI" id="CHEBI:59789"/>
    </ligand>
</feature>
<feature type="binding site" evidence="1">
    <location>
        <position position="78"/>
    </location>
    <ligand>
        <name>S-adenosyl-L-methionine</name>
        <dbReference type="ChEBI" id="CHEBI:59789"/>
    </ligand>
</feature>
<feature type="binding site" evidence="1">
    <location>
        <position position="99"/>
    </location>
    <ligand>
        <name>S-adenosyl-L-methionine</name>
        <dbReference type="ChEBI" id="CHEBI:59789"/>
    </ligand>
</feature>
<feature type="binding site" evidence="1">
    <location>
        <position position="106"/>
    </location>
    <ligand>
        <name>S-adenosyl-L-methionine</name>
        <dbReference type="ChEBI" id="CHEBI:59789"/>
    </ligand>
</feature>
<sequence length="307" mass="35027">MFEHIPVLLEESVSFLITNPDGIYVDATFGLGGHSKRILEKISNKGFLIAIDRDLEAIELGKRKLEAYKNVKIVHSSFSKVDELLECLGIEKIDGILFDFGVSSLQLDKQERGFSYNKEAFLDMRMDTTSKLTAYDVVNFYSQEDLEKIIREYGEERFARRIAKAIVERRSKKPIETTTELSSLISSLVPRPKDGSHPAQRTFQAIRIEVNGELDEIKIALEKSLRFLRSGGRICAISFHSLEDRIVKEFFKFHSLECVCPKDIPVCRCGKKKELNIITKKPITPSKEEIESNKRSHSAKLRVAEKV</sequence>
<name>RSMH_CALBD</name>
<dbReference type="EC" id="2.1.1.199" evidence="1"/>
<dbReference type="EMBL" id="CP001393">
    <property type="protein sequence ID" value="ACM59885.1"/>
    <property type="molecule type" value="Genomic_DNA"/>
</dbReference>
<dbReference type="RefSeq" id="WP_015907323.1">
    <property type="nucleotide sequence ID" value="NC_012034.1"/>
</dbReference>
<dbReference type="SMR" id="B9MQ93"/>
<dbReference type="STRING" id="521460.Athe_0770"/>
<dbReference type="GeneID" id="31772125"/>
<dbReference type="KEGG" id="ate:Athe_0770"/>
<dbReference type="eggNOG" id="COG0275">
    <property type="taxonomic scope" value="Bacteria"/>
</dbReference>
<dbReference type="HOGENOM" id="CLU_038422_2_0_9"/>
<dbReference type="Proteomes" id="UP000007723">
    <property type="component" value="Chromosome"/>
</dbReference>
<dbReference type="GO" id="GO:0005737">
    <property type="term" value="C:cytoplasm"/>
    <property type="evidence" value="ECO:0007669"/>
    <property type="project" value="UniProtKB-SubCell"/>
</dbReference>
<dbReference type="GO" id="GO:0071424">
    <property type="term" value="F:rRNA (cytosine-N4-)-methyltransferase activity"/>
    <property type="evidence" value="ECO:0007669"/>
    <property type="project" value="UniProtKB-UniRule"/>
</dbReference>
<dbReference type="GO" id="GO:0070475">
    <property type="term" value="P:rRNA base methylation"/>
    <property type="evidence" value="ECO:0007669"/>
    <property type="project" value="UniProtKB-UniRule"/>
</dbReference>
<dbReference type="FunFam" id="1.10.150.170:FF:000001">
    <property type="entry name" value="Ribosomal RNA small subunit methyltransferase H"/>
    <property type="match status" value="1"/>
</dbReference>
<dbReference type="Gene3D" id="1.10.150.170">
    <property type="entry name" value="Putative methyltransferase TM0872, insert domain"/>
    <property type="match status" value="1"/>
</dbReference>
<dbReference type="Gene3D" id="3.40.50.150">
    <property type="entry name" value="Vaccinia Virus protein VP39"/>
    <property type="match status" value="1"/>
</dbReference>
<dbReference type="HAMAP" id="MF_01007">
    <property type="entry name" value="16SrRNA_methyltr_H"/>
    <property type="match status" value="1"/>
</dbReference>
<dbReference type="InterPro" id="IPR002903">
    <property type="entry name" value="RsmH"/>
</dbReference>
<dbReference type="InterPro" id="IPR023397">
    <property type="entry name" value="SAM-dep_MeTrfase_MraW_recog"/>
</dbReference>
<dbReference type="InterPro" id="IPR029063">
    <property type="entry name" value="SAM-dependent_MTases_sf"/>
</dbReference>
<dbReference type="NCBIfam" id="TIGR00006">
    <property type="entry name" value="16S rRNA (cytosine(1402)-N(4))-methyltransferase RsmH"/>
    <property type="match status" value="1"/>
</dbReference>
<dbReference type="PANTHER" id="PTHR11265:SF0">
    <property type="entry name" value="12S RRNA N4-METHYLCYTIDINE METHYLTRANSFERASE"/>
    <property type="match status" value="1"/>
</dbReference>
<dbReference type="PANTHER" id="PTHR11265">
    <property type="entry name" value="S-ADENOSYL-METHYLTRANSFERASE MRAW"/>
    <property type="match status" value="1"/>
</dbReference>
<dbReference type="Pfam" id="PF01795">
    <property type="entry name" value="Methyltransf_5"/>
    <property type="match status" value="1"/>
</dbReference>
<dbReference type="PIRSF" id="PIRSF004486">
    <property type="entry name" value="MraW"/>
    <property type="match status" value="1"/>
</dbReference>
<dbReference type="SUPFAM" id="SSF81799">
    <property type="entry name" value="Putative methyltransferase TM0872, insert domain"/>
    <property type="match status" value="1"/>
</dbReference>
<dbReference type="SUPFAM" id="SSF53335">
    <property type="entry name" value="S-adenosyl-L-methionine-dependent methyltransferases"/>
    <property type="match status" value="1"/>
</dbReference>
<evidence type="ECO:0000255" key="1">
    <source>
        <dbReference type="HAMAP-Rule" id="MF_01007"/>
    </source>
</evidence>
<evidence type="ECO:0000256" key="2">
    <source>
        <dbReference type="SAM" id="MobiDB-lite"/>
    </source>
</evidence>
<organism>
    <name type="scientific">Caldicellulosiruptor bescii (strain ATCC BAA-1888 / DSM 6725 / KCTC 15123 / Z-1320)</name>
    <name type="common">Anaerocellum thermophilum</name>
    <dbReference type="NCBI Taxonomy" id="521460"/>
    <lineage>
        <taxon>Bacteria</taxon>
        <taxon>Bacillati</taxon>
        <taxon>Bacillota</taxon>
        <taxon>Bacillota incertae sedis</taxon>
        <taxon>Caldicellulosiruptorales</taxon>
        <taxon>Caldicellulosiruptoraceae</taxon>
        <taxon>Caldicellulosiruptor</taxon>
    </lineage>
</organism>
<comment type="function">
    <text evidence="1">Specifically methylates the N4 position of cytidine in position 1402 (C1402) of 16S rRNA.</text>
</comment>
<comment type="catalytic activity">
    <reaction evidence="1">
        <text>cytidine(1402) in 16S rRNA + S-adenosyl-L-methionine = N(4)-methylcytidine(1402) in 16S rRNA + S-adenosyl-L-homocysteine + H(+)</text>
        <dbReference type="Rhea" id="RHEA:42928"/>
        <dbReference type="Rhea" id="RHEA-COMP:10286"/>
        <dbReference type="Rhea" id="RHEA-COMP:10287"/>
        <dbReference type="ChEBI" id="CHEBI:15378"/>
        <dbReference type="ChEBI" id="CHEBI:57856"/>
        <dbReference type="ChEBI" id="CHEBI:59789"/>
        <dbReference type="ChEBI" id="CHEBI:74506"/>
        <dbReference type="ChEBI" id="CHEBI:82748"/>
        <dbReference type="EC" id="2.1.1.199"/>
    </reaction>
</comment>
<comment type="subcellular location">
    <subcellularLocation>
        <location evidence="1">Cytoplasm</location>
    </subcellularLocation>
</comment>
<comment type="similarity">
    <text evidence="1">Belongs to the methyltransferase superfamily. RsmH family.</text>
</comment>
<accession>B9MQ93</accession>
<protein>
    <recommendedName>
        <fullName evidence="1">Ribosomal RNA small subunit methyltransferase H</fullName>
        <ecNumber evidence="1">2.1.1.199</ecNumber>
    </recommendedName>
    <alternativeName>
        <fullName evidence="1">16S rRNA m(4)C1402 methyltransferase</fullName>
    </alternativeName>
    <alternativeName>
        <fullName evidence="1">rRNA (cytosine-N(4)-)-methyltransferase RsmH</fullName>
    </alternativeName>
</protein>
<keyword id="KW-0963">Cytoplasm</keyword>
<keyword id="KW-0489">Methyltransferase</keyword>
<keyword id="KW-0698">rRNA processing</keyword>
<keyword id="KW-0949">S-adenosyl-L-methionine</keyword>
<keyword id="KW-0808">Transferase</keyword>
<proteinExistence type="inferred from homology"/>
<gene>
    <name evidence="1" type="primary">rsmH</name>
    <name type="synonym">mraW</name>
    <name type="ordered locus">Athe_0770</name>
</gene>
<reference key="1">
    <citation type="submission" date="2009-01" db="EMBL/GenBank/DDBJ databases">
        <title>Complete sequence of chromosome of Caldicellulosiruptor becscii DSM 6725.</title>
        <authorList>
            <person name="Lucas S."/>
            <person name="Copeland A."/>
            <person name="Lapidus A."/>
            <person name="Glavina del Rio T."/>
            <person name="Tice H."/>
            <person name="Bruce D."/>
            <person name="Goodwin L."/>
            <person name="Pitluck S."/>
            <person name="Sims D."/>
            <person name="Meincke L."/>
            <person name="Brettin T."/>
            <person name="Detter J.C."/>
            <person name="Han C."/>
            <person name="Larimer F."/>
            <person name="Land M."/>
            <person name="Hauser L."/>
            <person name="Kyrpides N."/>
            <person name="Ovchinnikova G."/>
            <person name="Kataeva I."/>
            <person name="Adams M.W.W."/>
        </authorList>
    </citation>
    <scope>NUCLEOTIDE SEQUENCE [LARGE SCALE GENOMIC DNA]</scope>
    <source>
        <strain>ATCC BAA-1888 / DSM 6725 / KCTC 15123 / Z-1320</strain>
    </source>
</reference>